<accession>B9E740</accession>
<comment type="catalytic activity">
    <reaction evidence="1">
        <text>(S)-4-amino-5-oxopentanoate = 5-aminolevulinate</text>
        <dbReference type="Rhea" id="RHEA:14265"/>
        <dbReference type="ChEBI" id="CHEBI:57501"/>
        <dbReference type="ChEBI" id="CHEBI:356416"/>
        <dbReference type="EC" id="5.4.3.8"/>
    </reaction>
</comment>
<comment type="cofactor">
    <cofactor evidence="1">
        <name>pyridoxal 5'-phosphate</name>
        <dbReference type="ChEBI" id="CHEBI:597326"/>
    </cofactor>
</comment>
<comment type="pathway">
    <text evidence="1">Porphyrin-containing compound metabolism; protoporphyrin-IX biosynthesis; 5-aminolevulinate from L-glutamyl-tRNA(Glu): step 2/2.</text>
</comment>
<comment type="subunit">
    <text evidence="1">Homodimer.</text>
</comment>
<comment type="subcellular location">
    <subcellularLocation>
        <location evidence="1">Cytoplasm</location>
    </subcellularLocation>
</comment>
<comment type="similarity">
    <text evidence="1">Belongs to the class-III pyridoxal-phosphate-dependent aminotransferase family. HemL subfamily.</text>
</comment>
<reference key="1">
    <citation type="journal article" date="2009" name="J. Bacteriol.">
        <title>Complete genome sequence of Macrococcus caseolyticus strain JCSCS5402, reflecting the ancestral genome of the human-pathogenic staphylococci.</title>
        <authorList>
            <person name="Baba T."/>
            <person name="Kuwahara-Arai K."/>
            <person name="Uchiyama I."/>
            <person name="Takeuchi F."/>
            <person name="Ito T."/>
            <person name="Hiramatsu K."/>
        </authorList>
    </citation>
    <scope>NUCLEOTIDE SEQUENCE [LARGE SCALE GENOMIC DNA]</scope>
    <source>
        <strain>JCSC5402</strain>
    </source>
</reference>
<protein>
    <recommendedName>
        <fullName evidence="1">Glutamate-1-semialdehyde 2,1-aminomutase 1</fullName>
        <shortName evidence="1">GSA 1</shortName>
        <ecNumber evidence="1">5.4.3.8</ecNumber>
    </recommendedName>
    <alternativeName>
        <fullName evidence="1">Glutamate-1-semialdehyde aminotransferase 1</fullName>
        <shortName evidence="1">GSA-AT 1</shortName>
    </alternativeName>
</protein>
<gene>
    <name evidence="1" type="primary">hemL1</name>
    <name type="ordered locus">MCCL_1301</name>
</gene>
<evidence type="ECO:0000255" key="1">
    <source>
        <dbReference type="HAMAP-Rule" id="MF_00375"/>
    </source>
</evidence>
<proteinExistence type="inferred from homology"/>
<dbReference type="EC" id="5.4.3.8" evidence="1"/>
<dbReference type="EMBL" id="AP009484">
    <property type="protein sequence ID" value="BAH18008.1"/>
    <property type="molecule type" value="Genomic_DNA"/>
</dbReference>
<dbReference type="RefSeq" id="WP_012657206.1">
    <property type="nucleotide sequence ID" value="NC_011999.1"/>
</dbReference>
<dbReference type="SMR" id="B9E740"/>
<dbReference type="STRING" id="458233.MCCL_1301"/>
<dbReference type="GeneID" id="61128799"/>
<dbReference type="KEGG" id="mcl:MCCL_1301"/>
<dbReference type="eggNOG" id="COG0001">
    <property type="taxonomic scope" value="Bacteria"/>
</dbReference>
<dbReference type="HOGENOM" id="CLU_016922_1_5_9"/>
<dbReference type="OrthoDB" id="9807885at2"/>
<dbReference type="UniPathway" id="UPA00251">
    <property type="reaction ID" value="UER00317"/>
</dbReference>
<dbReference type="Proteomes" id="UP000001383">
    <property type="component" value="Chromosome"/>
</dbReference>
<dbReference type="GO" id="GO:0005737">
    <property type="term" value="C:cytoplasm"/>
    <property type="evidence" value="ECO:0007669"/>
    <property type="project" value="UniProtKB-SubCell"/>
</dbReference>
<dbReference type="GO" id="GO:0042286">
    <property type="term" value="F:glutamate-1-semialdehyde 2,1-aminomutase activity"/>
    <property type="evidence" value="ECO:0007669"/>
    <property type="project" value="UniProtKB-UniRule"/>
</dbReference>
<dbReference type="GO" id="GO:0030170">
    <property type="term" value="F:pyridoxal phosphate binding"/>
    <property type="evidence" value="ECO:0007669"/>
    <property type="project" value="InterPro"/>
</dbReference>
<dbReference type="GO" id="GO:0008483">
    <property type="term" value="F:transaminase activity"/>
    <property type="evidence" value="ECO:0007669"/>
    <property type="project" value="InterPro"/>
</dbReference>
<dbReference type="GO" id="GO:0006782">
    <property type="term" value="P:protoporphyrinogen IX biosynthetic process"/>
    <property type="evidence" value="ECO:0007669"/>
    <property type="project" value="UniProtKB-UniRule"/>
</dbReference>
<dbReference type="CDD" id="cd00610">
    <property type="entry name" value="OAT_like"/>
    <property type="match status" value="1"/>
</dbReference>
<dbReference type="FunFam" id="3.40.640.10:FF:000021">
    <property type="entry name" value="Glutamate-1-semialdehyde 2,1-aminomutase"/>
    <property type="match status" value="1"/>
</dbReference>
<dbReference type="Gene3D" id="3.90.1150.10">
    <property type="entry name" value="Aspartate Aminotransferase, domain 1"/>
    <property type="match status" value="1"/>
</dbReference>
<dbReference type="Gene3D" id="3.40.640.10">
    <property type="entry name" value="Type I PLP-dependent aspartate aminotransferase-like (Major domain)"/>
    <property type="match status" value="1"/>
</dbReference>
<dbReference type="HAMAP" id="MF_00375">
    <property type="entry name" value="HemL_aminotrans_3"/>
    <property type="match status" value="1"/>
</dbReference>
<dbReference type="InterPro" id="IPR004639">
    <property type="entry name" value="4pyrrol_synth_GluAld_NH2Trfase"/>
</dbReference>
<dbReference type="InterPro" id="IPR005814">
    <property type="entry name" value="Aminotrans_3"/>
</dbReference>
<dbReference type="InterPro" id="IPR049704">
    <property type="entry name" value="Aminotrans_3_PPA_site"/>
</dbReference>
<dbReference type="InterPro" id="IPR015424">
    <property type="entry name" value="PyrdxlP-dep_Trfase"/>
</dbReference>
<dbReference type="InterPro" id="IPR015421">
    <property type="entry name" value="PyrdxlP-dep_Trfase_major"/>
</dbReference>
<dbReference type="InterPro" id="IPR015422">
    <property type="entry name" value="PyrdxlP-dep_Trfase_small"/>
</dbReference>
<dbReference type="NCBIfam" id="TIGR00713">
    <property type="entry name" value="hemL"/>
    <property type="match status" value="1"/>
</dbReference>
<dbReference type="NCBIfam" id="NF000818">
    <property type="entry name" value="PRK00062.1"/>
    <property type="match status" value="1"/>
</dbReference>
<dbReference type="PANTHER" id="PTHR43713">
    <property type="entry name" value="GLUTAMATE-1-SEMIALDEHYDE 2,1-AMINOMUTASE"/>
    <property type="match status" value="1"/>
</dbReference>
<dbReference type="PANTHER" id="PTHR43713:SF3">
    <property type="entry name" value="GLUTAMATE-1-SEMIALDEHYDE 2,1-AMINOMUTASE 1, CHLOROPLASTIC-RELATED"/>
    <property type="match status" value="1"/>
</dbReference>
<dbReference type="Pfam" id="PF00202">
    <property type="entry name" value="Aminotran_3"/>
    <property type="match status" value="1"/>
</dbReference>
<dbReference type="SUPFAM" id="SSF53383">
    <property type="entry name" value="PLP-dependent transferases"/>
    <property type="match status" value="1"/>
</dbReference>
<dbReference type="PROSITE" id="PS00600">
    <property type="entry name" value="AA_TRANSFER_CLASS_3"/>
    <property type="match status" value="1"/>
</dbReference>
<sequence>MDYSKSKQAFKEAVNLMPGGVNSPVRAFKSVDMDPIFMERGKGSKIYDIDGNEYIDYVLSWGPLILGHANDTVTGALNKAVLNGTSFGAPTELENKMAELVIERVPSIEMVRMVSSGTEATLAALRLARGFTGKNKILKFIGCYHGHSDSLLIKAGSGVATLGLPDSPGVPKGTAENTITVHYNDLDAVKLAFEQFGDDIAGVIVEPVAGNMGVVPPVEGFLEGLREITTEHGALLIFDEVMTGFRVGYNCAQGYFGVIPDLTCLGKVIGGGLPVGAFGGRKDIMEHIAPSGPVYQAGTLSGNPLAMTGGYYTLSQLTPESYEYFNHLGDMLEAGLTDVFAKHNVPITINRAGSMIGFFLNEEKVTNFEIASKSDLKLFAAMYKEMANNGVFLPPSQFEGMFLSTEHTEEDIQKTINAFDNSLTVIL</sequence>
<keyword id="KW-0963">Cytoplasm</keyword>
<keyword id="KW-0413">Isomerase</keyword>
<keyword id="KW-0627">Porphyrin biosynthesis</keyword>
<keyword id="KW-0663">Pyridoxal phosphate</keyword>
<keyword id="KW-1185">Reference proteome</keyword>
<organism>
    <name type="scientific">Macrococcus caseolyticus (strain JCSC5402)</name>
    <name type="common">Macrococcoides caseolyticum</name>
    <dbReference type="NCBI Taxonomy" id="458233"/>
    <lineage>
        <taxon>Bacteria</taxon>
        <taxon>Bacillati</taxon>
        <taxon>Bacillota</taxon>
        <taxon>Bacilli</taxon>
        <taxon>Bacillales</taxon>
        <taxon>Staphylococcaceae</taxon>
        <taxon>Macrococcoides</taxon>
    </lineage>
</organism>
<name>GSA1_MACCJ</name>
<feature type="chain" id="PRO_0000382340" description="Glutamate-1-semialdehyde 2,1-aminomutase 1">
    <location>
        <begin position="1"/>
        <end position="427"/>
    </location>
</feature>
<feature type="modified residue" description="N6-(pyridoxal phosphate)lysine" evidence="1">
    <location>
        <position position="267"/>
    </location>
</feature>